<organism>
    <name type="scientific">Drosophila pseudoobscura pseudoobscura</name>
    <name type="common">Fruit fly</name>
    <dbReference type="NCBI Taxonomy" id="46245"/>
    <lineage>
        <taxon>Eukaryota</taxon>
        <taxon>Metazoa</taxon>
        <taxon>Ecdysozoa</taxon>
        <taxon>Arthropoda</taxon>
        <taxon>Hexapoda</taxon>
        <taxon>Insecta</taxon>
        <taxon>Pterygota</taxon>
        <taxon>Neoptera</taxon>
        <taxon>Endopterygota</taxon>
        <taxon>Diptera</taxon>
        <taxon>Brachycera</taxon>
        <taxon>Muscomorpha</taxon>
        <taxon>Ephydroidea</taxon>
        <taxon>Drosophilidae</taxon>
        <taxon>Drosophila</taxon>
        <taxon>Sophophora</taxon>
    </lineage>
</organism>
<name>EIF3B_DROPS</name>
<reference key="1">
    <citation type="journal article" date="2005" name="Genome Res.">
        <title>Comparative genome sequencing of Drosophila pseudoobscura: chromosomal, gene, and cis-element evolution.</title>
        <authorList>
            <person name="Richards S."/>
            <person name="Liu Y."/>
            <person name="Bettencourt B.R."/>
            <person name="Hradecky P."/>
            <person name="Letovsky S."/>
            <person name="Nielsen R."/>
            <person name="Thornton K."/>
            <person name="Hubisz M.J."/>
            <person name="Chen R."/>
            <person name="Meisel R.P."/>
            <person name="Couronne O."/>
            <person name="Hua S."/>
            <person name="Smith M.A."/>
            <person name="Zhang P."/>
            <person name="Liu J."/>
            <person name="Bussemaker H.J."/>
            <person name="van Batenburg M.F."/>
            <person name="Howells S.L."/>
            <person name="Scherer S.E."/>
            <person name="Sodergren E."/>
            <person name="Matthews B.B."/>
            <person name="Crosby M.A."/>
            <person name="Schroeder A.J."/>
            <person name="Ortiz-Barrientos D."/>
            <person name="Rives C.M."/>
            <person name="Metzker M.L."/>
            <person name="Muzny D.M."/>
            <person name="Scott G."/>
            <person name="Steffen D."/>
            <person name="Wheeler D.A."/>
            <person name="Worley K.C."/>
            <person name="Havlak P."/>
            <person name="Durbin K.J."/>
            <person name="Egan A."/>
            <person name="Gill R."/>
            <person name="Hume J."/>
            <person name="Morgan M.B."/>
            <person name="Miner G."/>
            <person name="Hamilton C."/>
            <person name="Huang Y."/>
            <person name="Waldron L."/>
            <person name="Verduzco D."/>
            <person name="Clerc-Blankenburg K.P."/>
            <person name="Dubchak I."/>
            <person name="Noor M.A.F."/>
            <person name="Anderson W."/>
            <person name="White K.P."/>
            <person name="Clark A.G."/>
            <person name="Schaeffer S.W."/>
            <person name="Gelbart W.M."/>
            <person name="Weinstock G.M."/>
            <person name="Gibbs R.A."/>
        </authorList>
    </citation>
    <scope>NUCLEOTIDE SEQUENCE [LARGE SCALE GENOMIC DNA]</scope>
    <source>
        <strain>MV2-25 / Tucson 14011-0121.94</strain>
    </source>
</reference>
<gene>
    <name evidence="2" type="primary">eIF3b</name>
    <name evidence="2" type="synonym">eIF3-S9</name>
    <name type="ORF">GA24735</name>
</gene>
<accession>B5E081</accession>
<keyword id="KW-0175">Coiled coil</keyword>
<keyword id="KW-0963">Cytoplasm</keyword>
<keyword id="KW-0396">Initiation factor</keyword>
<keyword id="KW-0648">Protein biosynthesis</keyword>
<keyword id="KW-1185">Reference proteome</keyword>
<keyword id="KW-0677">Repeat</keyword>
<keyword id="KW-0694">RNA-binding</keyword>
<keyword id="KW-0853">WD repeat</keyword>
<proteinExistence type="inferred from homology"/>
<comment type="function">
    <text evidence="2">RNA-binding component of the eukaryotic translation initiation factor 3 (eIF-3) complex, which is involved in protein synthesis of a specialized repertoire of mRNAs and, together with other initiation factors, stimulates binding of mRNA and methionyl-tRNAi to the 40S ribosome. The eIF-3 complex specifically targets and initiates translation of a subset of mRNAs involved in cell proliferation.</text>
</comment>
<comment type="subunit">
    <text evidence="1 2">Component of the eukaryotic translation initiation factor 3 (eIF-3) complex. The eIF-3 complex interacts with pix. Interacts with mxt (By similarity).</text>
</comment>
<comment type="subcellular location">
    <subcellularLocation>
        <location evidence="2">Cytoplasm</location>
    </subcellularLocation>
</comment>
<comment type="similarity">
    <text evidence="2">Belongs to the eIF-3 subunit B family.</text>
</comment>
<evidence type="ECO:0000250" key="1">
    <source>
        <dbReference type="UniProtKB" id="Q0E940"/>
    </source>
</evidence>
<evidence type="ECO:0000255" key="2">
    <source>
        <dbReference type="HAMAP-Rule" id="MF_03001"/>
    </source>
</evidence>
<evidence type="ECO:0000256" key="3">
    <source>
        <dbReference type="SAM" id="MobiDB-lite"/>
    </source>
</evidence>
<dbReference type="EMBL" id="CM000071">
    <property type="protein sequence ID" value="EDY68941.1"/>
    <property type="molecule type" value="Genomic_DNA"/>
</dbReference>
<dbReference type="RefSeq" id="XP_002138383.1">
    <property type="nucleotide sequence ID" value="XM_002138347.2"/>
</dbReference>
<dbReference type="SMR" id="B5E081"/>
<dbReference type="FunCoup" id="B5E081">
    <property type="interactions" value="2725"/>
</dbReference>
<dbReference type="STRING" id="46245.B5E081"/>
<dbReference type="EnsemblMetazoa" id="FBtr0279222">
    <property type="protein sequence ID" value="FBpp0277660"/>
    <property type="gene ID" value="FBgn0246121"/>
</dbReference>
<dbReference type="GeneID" id="6898328"/>
<dbReference type="KEGG" id="dpo:6898328"/>
<dbReference type="CTD" id="8662"/>
<dbReference type="eggNOG" id="KOG2314">
    <property type="taxonomic scope" value="Eukaryota"/>
</dbReference>
<dbReference type="HOGENOM" id="CLU_011152_1_0_1"/>
<dbReference type="InParanoid" id="B5E081"/>
<dbReference type="OMA" id="LWGGPQF"/>
<dbReference type="Proteomes" id="UP000001819">
    <property type="component" value="Chromosome 3"/>
</dbReference>
<dbReference type="Bgee" id="FBgn0246121">
    <property type="expression patterns" value="Expressed in female reproductive system and 2 other cell types or tissues"/>
</dbReference>
<dbReference type="GO" id="GO:0016282">
    <property type="term" value="C:eukaryotic 43S preinitiation complex"/>
    <property type="evidence" value="ECO:0007669"/>
    <property type="project" value="UniProtKB-UniRule"/>
</dbReference>
<dbReference type="GO" id="GO:0033290">
    <property type="term" value="C:eukaryotic 48S preinitiation complex"/>
    <property type="evidence" value="ECO:0007669"/>
    <property type="project" value="UniProtKB-UniRule"/>
</dbReference>
<dbReference type="GO" id="GO:0005852">
    <property type="term" value="C:eukaryotic translation initiation factor 3 complex"/>
    <property type="evidence" value="ECO:0000250"/>
    <property type="project" value="UniProtKB"/>
</dbReference>
<dbReference type="GO" id="GO:0003723">
    <property type="term" value="F:RNA binding"/>
    <property type="evidence" value="ECO:0007669"/>
    <property type="project" value="UniProtKB-UniRule"/>
</dbReference>
<dbReference type="GO" id="GO:0003743">
    <property type="term" value="F:translation initiation factor activity"/>
    <property type="evidence" value="ECO:0000250"/>
    <property type="project" value="UniProtKB"/>
</dbReference>
<dbReference type="GO" id="GO:0031369">
    <property type="term" value="F:translation initiation factor binding"/>
    <property type="evidence" value="ECO:0007669"/>
    <property type="project" value="InterPro"/>
</dbReference>
<dbReference type="GO" id="GO:0001732">
    <property type="term" value="P:formation of cytoplasmic translation initiation complex"/>
    <property type="evidence" value="ECO:0007669"/>
    <property type="project" value="UniProtKB-UniRule"/>
</dbReference>
<dbReference type="GO" id="GO:0006446">
    <property type="term" value="P:regulation of translational initiation"/>
    <property type="evidence" value="ECO:0000250"/>
    <property type="project" value="UniProtKB"/>
</dbReference>
<dbReference type="CDD" id="cd12278">
    <property type="entry name" value="RRM_eIF3B"/>
    <property type="match status" value="1"/>
</dbReference>
<dbReference type="FunFam" id="2.130.10.10:FF:000884">
    <property type="entry name" value="Eukaryotic translation initiation factor 3 subunit B"/>
    <property type="match status" value="1"/>
</dbReference>
<dbReference type="FunFam" id="3.30.70.330:FF:000607">
    <property type="entry name" value="Eukaryotic translation initiation factor 3 subunit B"/>
    <property type="match status" value="1"/>
</dbReference>
<dbReference type="Gene3D" id="3.30.70.330">
    <property type="match status" value="1"/>
</dbReference>
<dbReference type="Gene3D" id="2.130.10.10">
    <property type="entry name" value="YVTN repeat-like/Quinoprotein amine dehydrogenase"/>
    <property type="match status" value="1"/>
</dbReference>
<dbReference type="HAMAP" id="MF_03001">
    <property type="entry name" value="eIF3b"/>
    <property type="match status" value="1"/>
</dbReference>
<dbReference type="InterPro" id="IPR011400">
    <property type="entry name" value="EIF3B"/>
</dbReference>
<dbReference type="InterPro" id="IPR034363">
    <property type="entry name" value="eIF3B_RRM"/>
</dbReference>
<dbReference type="InterPro" id="IPR012677">
    <property type="entry name" value="Nucleotide-bd_a/b_plait_sf"/>
</dbReference>
<dbReference type="InterPro" id="IPR035979">
    <property type="entry name" value="RBD_domain_sf"/>
</dbReference>
<dbReference type="InterPro" id="IPR000504">
    <property type="entry name" value="RRM_dom"/>
</dbReference>
<dbReference type="InterPro" id="IPR013979">
    <property type="entry name" value="TIF_beta_prop-like"/>
</dbReference>
<dbReference type="InterPro" id="IPR015943">
    <property type="entry name" value="WD40/YVTN_repeat-like_dom_sf"/>
</dbReference>
<dbReference type="PANTHER" id="PTHR14068">
    <property type="entry name" value="EUKARYOTIC TRANSLATION INITIATION FACTOR 3 EIF3 -RELATED"/>
    <property type="match status" value="1"/>
</dbReference>
<dbReference type="PANTHER" id="PTHR14068:SF0">
    <property type="entry name" value="EUKARYOTIC TRANSLATION INITIATION FACTOR 3 SUBUNIT B"/>
    <property type="match status" value="1"/>
</dbReference>
<dbReference type="Pfam" id="PF08662">
    <property type="entry name" value="eIF2A"/>
    <property type="match status" value="1"/>
</dbReference>
<dbReference type="Pfam" id="PF00076">
    <property type="entry name" value="RRM_1"/>
    <property type="match status" value="1"/>
</dbReference>
<dbReference type="PIRSF" id="PIRSF036424">
    <property type="entry name" value="eIF3b"/>
    <property type="match status" value="1"/>
</dbReference>
<dbReference type="SMART" id="SM00360">
    <property type="entry name" value="RRM"/>
    <property type="match status" value="1"/>
</dbReference>
<dbReference type="SUPFAM" id="SSF82171">
    <property type="entry name" value="DPP6 N-terminal domain-like"/>
    <property type="match status" value="1"/>
</dbReference>
<dbReference type="SUPFAM" id="SSF54928">
    <property type="entry name" value="RNA-binding domain, RBD"/>
    <property type="match status" value="1"/>
</dbReference>
<dbReference type="PROSITE" id="PS50102">
    <property type="entry name" value="RRM"/>
    <property type="match status" value="1"/>
</dbReference>
<protein>
    <recommendedName>
        <fullName evidence="2">Eukaryotic translation initiation factor 3 subunit B</fullName>
        <shortName evidence="2">eIF3b</shortName>
    </recommendedName>
    <alternativeName>
        <fullName evidence="2">Eukaryotic translation initiation factor 3 subunit 9</fullName>
    </alternativeName>
</protein>
<sequence length="690" mass="80271">MAKKKSEDHSGGDANDSDYNEEPNFEDPPNFVDNISDDDLLGDMLAQRPSEADGVESVVVVDNIPKVEPVRLEKLKSVINKLFSHCGDIVNVVYPVDEEGKTKGYAFMEYKHAGQAEEAVKKLNNHRLDKNHTFAVNLFTDFQKYENIPEKWEPPTVQSFKVQNDLYNFINDPDAYDQYCVAAETSQNCVQVGFWQNVLPEPNELETRERFTDTFVKWSPLGTYVVTFHKPGVAIWGGSSFQKIQKFPHTGTQFVEFSPCENYLVTYGPTPTGQKIIIWDIRTGAEKRSFVADGMSVLSMFRWSHDDKYVARMGDNSIHIYETPSFYLLDLKSIKIPGIRGFSWSPTDNVIAYWVEEQNQIPARVTLMEIPKKRETRNKNLFHVADCKLHWQKSGDYLCVKVDRYSKLKKDKKELDVKFLGMFYNFEIFHMREKEVPVDSVEIRELILAFAWEPIGNKFSIIHGEPNSANVSFYEVNKGVKPSLVKRLEKKSCTHLFWSPRGQFIVMANLTMGTFEFVDSTNDYIISASPDHFRASEVEWDPTGRYVVTGVSSWKVKEDTGFNMYTFQGRIIKRTILKNFVQFLWRPRPPTLLSEDKQKDIKKNLKKYYPAFEQKDRLRLTRASKELLEKRSQLRETFMEYRNKRIGEWKEQKSRRVMLRGHVDTDNLETEEVDEEVVEFLVKEEITLLE</sequence>
<feature type="chain" id="PRO_0000363800" description="Eukaryotic translation initiation factor 3 subunit B">
    <location>
        <begin position="1"/>
        <end position="690"/>
    </location>
</feature>
<feature type="domain" description="RRM" evidence="2">
    <location>
        <begin position="57"/>
        <end position="141"/>
    </location>
</feature>
<feature type="repeat" description="WD 1">
    <location>
        <begin position="207"/>
        <end position="246"/>
    </location>
</feature>
<feature type="repeat" description="WD 2">
    <location>
        <begin position="247"/>
        <end position="289"/>
    </location>
</feature>
<feature type="repeat" description="WD 3">
    <location>
        <begin position="293"/>
        <end position="331"/>
    </location>
</feature>
<feature type="repeat" description="WD 4">
    <location>
        <begin position="334"/>
        <end position="369"/>
    </location>
</feature>
<feature type="repeat" description="WD 5">
    <location>
        <begin position="442"/>
        <end position="484"/>
    </location>
</feature>
<feature type="repeat" description="WD 6">
    <location>
        <begin position="530"/>
        <end position="575"/>
    </location>
</feature>
<feature type="region of interest" description="Disordered" evidence="3">
    <location>
        <begin position="1"/>
        <end position="37"/>
    </location>
</feature>
<feature type="coiled-coil region" evidence="2">
    <location>
        <begin position="614"/>
        <end position="645"/>
    </location>
</feature>
<feature type="compositionally biased region" description="Basic and acidic residues" evidence="3">
    <location>
        <begin position="1"/>
        <end position="11"/>
    </location>
</feature>
<feature type="compositionally biased region" description="Acidic residues" evidence="3">
    <location>
        <begin position="15"/>
        <end position="25"/>
    </location>
</feature>